<sequence length="103" mass="10744">MIELSYAPDVAGRRSNWPKGSGVNTWTAIRWTFAEDSPYVGTGLERMASDTHGGGGGRPVTPPPPGMHHLGCSRGVLLISSQRDAGHKTCDPAAGGTLTSVLT</sequence>
<gene>
    <name type="ordered locus">BQ2027_MB2954</name>
</gene>
<dbReference type="EMBL" id="LT708304">
    <property type="protein sequence ID" value="SIU01575.1"/>
    <property type="molecule type" value="Genomic_DNA"/>
</dbReference>
<dbReference type="RefSeq" id="NP_856599.1">
    <property type="nucleotide sequence ID" value="NC_002945.3"/>
</dbReference>
<dbReference type="RefSeq" id="WP_003900596.1">
    <property type="nucleotide sequence ID" value="NC_002945.4"/>
</dbReference>
<dbReference type="KEGG" id="mbo:BQ2027_MB2954"/>
<dbReference type="PATRIC" id="fig|233413.5.peg.3241"/>
<dbReference type="Proteomes" id="UP000001419">
    <property type="component" value="Chromosome"/>
</dbReference>
<accession>P65062</accession>
<accession>A0A1R3Y4L4</accession>
<accession>Q10975</accession>
<accession>X2BMU1</accession>
<proteinExistence type="inferred from homology"/>
<reference key="1">
    <citation type="journal article" date="2003" name="Proc. Natl. Acad. Sci. U.S.A.">
        <title>The complete genome sequence of Mycobacterium bovis.</title>
        <authorList>
            <person name="Garnier T."/>
            <person name="Eiglmeier K."/>
            <person name="Camus J.-C."/>
            <person name="Medina N."/>
            <person name="Mansoor H."/>
            <person name="Pryor M."/>
            <person name="Duthoy S."/>
            <person name="Grondin S."/>
            <person name="Lacroix C."/>
            <person name="Monsempe C."/>
            <person name="Simon S."/>
            <person name="Harris B."/>
            <person name="Atkin R."/>
            <person name="Doggett J."/>
            <person name="Mayes R."/>
            <person name="Keating L."/>
            <person name="Wheeler P.R."/>
            <person name="Parkhill J."/>
            <person name="Barrell B.G."/>
            <person name="Cole S.T."/>
            <person name="Gordon S.V."/>
            <person name="Hewinson R.G."/>
        </authorList>
    </citation>
    <scope>NUCLEOTIDE SEQUENCE [LARGE SCALE GENOMIC DNA]</scope>
    <source>
        <strain>ATCC BAA-935 / AF2122/97</strain>
    </source>
</reference>
<reference key="2">
    <citation type="journal article" date="2017" name="Genome Announc.">
        <title>Updated reference genome sequence and annotation of Mycobacterium bovis AF2122/97.</title>
        <authorList>
            <person name="Malone K.M."/>
            <person name="Farrell D."/>
            <person name="Stuber T.P."/>
            <person name="Schubert O.T."/>
            <person name="Aebersold R."/>
            <person name="Robbe-Austerman S."/>
            <person name="Gordon S.V."/>
        </authorList>
    </citation>
    <scope>NUCLEOTIDE SEQUENCE [LARGE SCALE GENOMIC DNA]</scope>
    <scope>GENOME REANNOTATION</scope>
    <source>
        <strain>ATCC BAA-935 / AF2122/97</strain>
    </source>
</reference>
<evidence type="ECO:0000255" key="1"/>
<evidence type="ECO:0000256" key="2">
    <source>
        <dbReference type="SAM" id="MobiDB-lite"/>
    </source>
</evidence>
<name>Y2954_MYCBO</name>
<feature type="signal peptide" evidence="1">
    <location>
        <begin position="1"/>
        <end position="34"/>
    </location>
</feature>
<feature type="chain" id="PRO_0000014150" description="Uncharacterized protein Mb2954">
    <location>
        <begin position="35"/>
        <end position="103"/>
    </location>
</feature>
<feature type="region of interest" description="Disordered" evidence="2">
    <location>
        <begin position="1"/>
        <end position="20"/>
    </location>
</feature>
<feature type="region of interest" description="Disordered" evidence="2">
    <location>
        <begin position="44"/>
        <end position="71"/>
    </location>
</feature>
<protein>
    <recommendedName>
        <fullName>Uncharacterized protein Mb2954</fullName>
    </recommendedName>
</protein>
<organism>
    <name type="scientific">Mycobacterium bovis (strain ATCC BAA-935 / AF2122/97)</name>
    <dbReference type="NCBI Taxonomy" id="233413"/>
    <lineage>
        <taxon>Bacteria</taxon>
        <taxon>Bacillati</taxon>
        <taxon>Actinomycetota</taxon>
        <taxon>Actinomycetes</taxon>
        <taxon>Mycobacteriales</taxon>
        <taxon>Mycobacteriaceae</taxon>
        <taxon>Mycobacterium</taxon>
        <taxon>Mycobacterium tuberculosis complex</taxon>
    </lineage>
</organism>
<keyword id="KW-1185">Reference proteome</keyword>
<keyword id="KW-0732">Signal</keyword>